<accession>Q6AS31</accession>
<dbReference type="EMBL" id="CR522870">
    <property type="protein sequence ID" value="CAG34844.1"/>
    <property type="molecule type" value="Genomic_DNA"/>
</dbReference>
<dbReference type="RefSeq" id="WP_011187360.1">
    <property type="nucleotide sequence ID" value="NC_006138.1"/>
</dbReference>
<dbReference type="SMR" id="Q6AS31"/>
<dbReference type="STRING" id="177439.DP0115"/>
<dbReference type="KEGG" id="dps:DP0115"/>
<dbReference type="eggNOG" id="COG1952">
    <property type="taxonomic scope" value="Bacteria"/>
</dbReference>
<dbReference type="HOGENOM" id="CLU_111574_1_0_7"/>
<dbReference type="OrthoDB" id="9795145at2"/>
<dbReference type="Proteomes" id="UP000000602">
    <property type="component" value="Chromosome"/>
</dbReference>
<dbReference type="GO" id="GO:0005737">
    <property type="term" value="C:cytoplasm"/>
    <property type="evidence" value="ECO:0007669"/>
    <property type="project" value="UniProtKB-SubCell"/>
</dbReference>
<dbReference type="GO" id="GO:0051082">
    <property type="term" value="F:unfolded protein binding"/>
    <property type="evidence" value="ECO:0007669"/>
    <property type="project" value="InterPro"/>
</dbReference>
<dbReference type="GO" id="GO:0051262">
    <property type="term" value="P:protein tetramerization"/>
    <property type="evidence" value="ECO:0007669"/>
    <property type="project" value="InterPro"/>
</dbReference>
<dbReference type="GO" id="GO:0015031">
    <property type="term" value="P:protein transport"/>
    <property type="evidence" value="ECO:0007669"/>
    <property type="project" value="UniProtKB-KW"/>
</dbReference>
<dbReference type="Gene3D" id="3.10.420.10">
    <property type="entry name" value="SecB-like"/>
    <property type="match status" value="1"/>
</dbReference>
<dbReference type="HAMAP" id="MF_00821">
    <property type="entry name" value="SecB"/>
    <property type="match status" value="1"/>
</dbReference>
<dbReference type="InterPro" id="IPR003708">
    <property type="entry name" value="SecB"/>
</dbReference>
<dbReference type="InterPro" id="IPR035958">
    <property type="entry name" value="SecB-like_sf"/>
</dbReference>
<dbReference type="NCBIfam" id="NF004392">
    <property type="entry name" value="PRK05751.1-3"/>
    <property type="match status" value="1"/>
</dbReference>
<dbReference type="NCBIfam" id="TIGR00809">
    <property type="entry name" value="secB"/>
    <property type="match status" value="1"/>
</dbReference>
<dbReference type="PANTHER" id="PTHR36918">
    <property type="match status" value="1"/>
</dbReference>
<dbReference type="PANTHER" id="PTHR36918:SF1">
    <property type="entry name" value="PROTEIN-EXPORT PROTEIN SECB"/>
    <property type="match status" value="1"/>
</dbReference>
<dbReference type="Pfam" id="PF02556">
    <property type="entry name" value="SecB"/>
    <property type="match status" value="1"/>
</dbReference>
<dbReference type="PRINTS" id="PR01594">
    <property type="entry name" value="SECBCHAPRONE"/>
</dbReference>
<dbReference type="SUPFAM" id="SSF54611">
    <property type="entry name" value="SecB-like"/>
    <property type="match status" value="1"/>
</dbReference>
<feature type="chain" id="PRO_0000055365" description="Protein-export protein SecB">
    <location>
        <begin position="1"/>
        <end position="156"/>
    </location>
</feature>
<protein>
    <recommendedName>
        <fullName evidence="1">Protein-export protein SecB</fullName>
    </recommendedName>
</protein>
<sequence length="156" mass="17496">MAETNEKQAAHPEFRMQKMYTKDLSFESPSAPAVFLDGGSEPKVELNLQLNNKKVDDDHWEVSLEINAKVTADDGAKTLFILELEHAAIFWVRNIPEEHLAMVLAVDCPTLLFPFTRQIASQVSVDGGFAPFLMEPVNFMALFQGAKKQEQEQTAN</sequence>
<evidence type="ECO:0000255" key="1">
    <source>
        <dbReference type="HAMAP-Rule" id="MF_00821"/>
    </source>
</evidence>
<organism>
    <name type="scientific">Desulfotalea psychrophila (strain LSv54 / DSM 12343)</name>
    <dbReference type="NCBI Taxonomy" id="177439"/>
    <lineage>
        <taxon>Bacteria</taxon>
        <taxon>Pseudomonadati</taxon>
        <taxon>Thermodesulfobacteriota</taxon>
        <taxon>Desulfobulbia</taxon>
        <taxon>Desulfobulbales</taxon>
        <taxon>Desulfocapsaceae</taxon>
        <taxon>Desulfotalea</taxon>
    </lineage>
</organism>
<comment type="function">
    <text evidence="1">One of the proteins required for the normal export of preproteins out of the cell cytoplasm. It is a molecular chaperone that binds to a subset of precursor proteins, maintaining them in a translocation-competent state. It also specifically binds to its receptor SecA.</text>
</comment>
<comment type="subunit">
    <text evidence="1">Homotetramer, a dimer of dimers. One homotetramer interacts with 1 SecA dimer.</text>
</comment>
<comment type="subcellular location">
    <subcellularLocation>
        <location evidence="1">Cytoplasm</location>
    </subcellularLocation>
</comment>
<comment type="similarity">
    <text evidence="1">Belongs to the SecB family.</text>
</comment>
<reference key="1">
    <citation type="journal article" date="2004" name="Environ. Microbiol.">
        <title>The genome of Desulfotalea psychrophila, a sulfate-reducing bacterium from permanently cold Arctic sediments.</title>
        <authorList>
            <person name="Rabus R."/>
            <person name="Ruepp A."/>
            <person name="Frickey T."/>
            <person name="Rattei T."/>
            <person name="Fartmann B."/>
            <person name="Stark M."/>
            <person name="Bauer M."/>
            <person name="Zibat A."/>
            <person name="Lombardot T."/>
            <person name="Becker I."/>
            <person name="Amann J."/>
            <person name="Gellner K."/>
            <person name="Teeling H."/>
            <person name="Leuschner W.D."/>
            <person name="Gloeckner F.-O."/>
            <person name="Lupas A.N."/>
            <person name="Amann R."/>
            <person name="Klenk H.-P."/>
        </authorList>
    </citation>
    <scope>NUCLEOTIDE SEQUENCE [LARGE SCALE GENOMIC DNA]</scope>
    <source>
        <strain>DSM 12343 / LSv54</strain>
    </source>
</reference>
<name>SECB_DESPS</name>
<gene>
    <name evidence="1" type="primary">secB</name>
    <name type="ordered locus">DP0115</name>
</gene>
<keyword id="KW-0143">Chaperone</keyword>
<keyword id="KW-0963">Cytoplasm</keyword>
<keyword id="KW-0653">Protein transport</keyword>
<keyword id="KW-1185">Reference proteome</keyword>
<keyword id="KW-0811">Translocation</keyword>
<keyword id="KW-0813">Transport</keyword>
<proteinExistence type="inferred from homology"/>